<name>RSMG_PSELT</name>
<comment type="function">
    <text evidence="1">Specifically methylates the N7 position of a guanine in 16S rRNA.</text>
</comment>
<comment type="subcellular location">
    <subcellularLocation>
        <location evidence="1">Cytoplasm</location>
    </subcellularLocation>
</comment>
<comment type="similarity">
    <text evidence="1">Belongs to the methyltransferase superfamily. RNA methyltransferase RsmG family.</text>
</comment>
<dbReference type="EC" id="2.1.1.-" evidence="1"/>
<dbReference type="EMBL" id="CP000812">
    <property type="protein sequence ID" value="ABV32807.1"/>
    <property type="molecule type" value="Genomic_DNA"/>
</dbReference>
<dbReference type="RefSeq" id="WP_012002288.1">
    <property type="nucleotide sequence ID" value="NZ_BSDV01000001.1"/>
</dbReference>
<dbReference type="SMR" id="A8F3S3"/>
<dbReference type="STRING" id="416591.Tlet_0237"/>
<dbReference type="KEGG" id="tle:Tlet_0237"/>
<dbReference type="eggNOG" id="COG0357">
    <property type="taxonomic scope" value="Bacteria"/>
</dbReference>
<dbReference type="HOGENOM" id="CLU_065341_0_1_0"/>
<dbReference type="OrthoDB" id="9808773at2"/>
<dbReference type="Proteomes" id="UP000002016">
    <property type="component" value="Chromosome"/>
</dbReference>
<dbReference type="GO" id="GO:0005829">
    <property type="term" value="C:cytosol"/>
    <property type="evidence" value="ECO:0007669"/>
    <property type="project" value="TreeGrafter"/>
</dbReference>
<dbReference type="GO" id="GO:0070043">
    <property type="term" value="F:rRNA (guanine-N7-)-methyltransferase activity"/>
    <property type="evidence" value="ECO:0007669"/>
    <property type="project" value="UniProtKB-UniRule"/>
</dbReference>
<dbReference type="CDD" id="cd02440">
    <property type="entry name" value="AdoMet_MTases"/>
    <property type="match status" value="1"/>
</dbReference>
<dbReference type="Gene3D" id="3.40.50.150">
    <property type="entry name" value="Vaccinia Virus protein VP39"/>
    <property type="match status" value="1"/>
</dbReference>
<dbReference type="HAMAP" id="MF_00074">
    <property type="entry name" value="16SrRNA_methyltr_G"/>
    <property type="match status" value="1"/>
</dbReference>
<dbReference type="InterPro" id="IPR003682">
    <property type="entry name" value="rRNA_ssu_MeTfrase_G"/>
</dbReference>
<dbReference type="InterPro" id="IPR029063">
    <property type="entry name" value="SAM-dependent_MTases_sf"/>
</dbReference>
<dbReference type="NCBIfam" id="TIGR00138">
    <property type="entry name" value="rsmG_gidB"/>
    <property type="match status" value="1"/>
</dbReference>
<dbReference type="PANTHER" id="PTHR31760">
    <property type="entry name" value="S-ADENOSYL-L-METHIONINE-DEPENDENT METHYLTRANSFERASES SUPERFAMILY PROTEIN"/>
    <property type="match status" value="1"/>
</dbReference>
<dbReference type="PANTHER" id="PTHR31760:SF0">
    <property type="entry name" value="S-ADENOSYL-L-METHIONINE-DEPENDENT METHYLTRANSFERASES SUPERFAMILY PROTEIN"/>
    <property type="match status" value="1"/>
</dbReference>
<dbReference type="Pfam" id="PF02527">
    <property type="entry name" value="GidB"/>
    <property type="match status" value="1"/>
</dbReference>
<dbReference type="PIRSF" id="PIRSF003078">
    <property type="entry name" value="GidB"/>
    <property type="match status" value="1"/>
</dbReference>
<dbReference type="SUPFAM" id="SSF53335">
    <property type="entry name" value="S-adenosyl-L-methionine-dependent methyltransferases"/>
    <property type="match status" value="1"/>
</dbReference>
<accession>A8F3S3</accession>
<evidence type="ECO:0000255" key="1">
    <source>
        <dbReference type="HAMAP-Rule" id="MF_00074"/>
    </source>
</evidence>
<sequence length="225" mass="25446">MNKVAEIFREYGIKIDDSKTEKLDSYIDLLISAPINLTSLRDKEYAIHKHIVDIVFPVKMLTGKLLDVGTGGGIPGLILAILFPINATLVESVRKKVMWLEKILNMLNIGNVNLLCSRAEKLPADKKESFDIVTARAVSELRILLELCAPFCKVGGRLFFYKGPNWKQEYDAAHNAMKTLNVETIEIVSYTLKTGEKRVLLQFQKVGRTPDNYPRETKKILKNPL</sequence>
<reference key="1">
    <citation type="submission" date="2007-08" db="EMBL/GenBank/DDBJ databases">
        <title>Complete sequence of Thermotoga lettingae TMO.</title>
        <authorList>
            <consortium name="US DOE Joint Genome Institute"/>
            <person name="Copeland A."/>
            <person name="Lucas S."/>
            <person name="Lapidus A."/>
            <person name="Barry K."/>
            <person name="Glavina del Rio T."/>
            <person name="Dalin E."/>
            <person name="Tice H."/>
            <person name="Pitluck S."/>
            <person name="Foster B."/>
            <person name="Bruce D."/>
            <person name="Schmutz J."/>
            <person name="Larimer F."/>
            <person name="Land M."/>
            <person name="Hauser L."/>
            <person name="Kyrpides N."/>
            <person name="Mikhailova N."/>
            <person name="Nelson K."/>
            <person name="Gogarten J.P."/>
            <person name="Noll K."/>
            <person name="Richardson P."/>
        </authorList>
    </citation>
    <scope>NUCLEOTIDE SEQUENCE [LARGE SCALE GENOMIC DNA]</scope>
    <source>
        <strain>ATCC BAA-301 / DSM 14385 / NBRC 107922 / TMO</strain>
    </source>
</reference>
<protein>
    <recommendedName>
        <fullName evidence="1">Ribosomal RNA small subunit methyltransferase G</fullName>
        <ecNumber evidence="1">2.1.1.-</ecNumber>
    </recommendedName>
    <alternativeName>
        <fullName evidence="1">16S rRNA 7-methylguanosine methyltransferase</fullName>
        <shortName evidence="1">16S rRNA m7G methyltransferase</shortName>
    </alternativeName>
</protein>
<proteinExistence type="inferred from homology"/>
<keyword id="KW-0963">Cytoplasm</keyword>
<keyword id="KW-0489">Methyltransferase</keyword>
<keyword id="KW-1185">Reference proteome</keyword>
<keyword id="KW-0698">rRNA processing</keyword>
<keyword id="KW-0949">S-adenosyl-L-methionine</keyword>
<keyword id="KW-0808">Transferase</keyword>
<organism>
    <name type="scientific">Pseudothermotoga lettingae (strain ATCC BAA-301 / DSM 14385 / NBRC 107922 / TMO)</name>
    <name type="common">Thermotoga lettingae</name>
    <dbReference type="NCBI Taxonomy" id="416591"/>
    <lineage>
        <taxon>Bacteria</taxon>
        <taxon>Thermotogati</taxon>
        <taxon>Thermotogota</taxon>
        <taxon>Thermotogae</taxon>
        <taxon>Thermotogales</taxon>
        <taxon>Thermotogaceae</taxon>
        <taxon>Pseudothermotoga</taxon>
    </lineage>
</organism>
<feature type="chain" id="PRO_0000335444" description="Ribosomal RNA small subunit methyltransferase G">
    <location>
        <begin position="1"/>
        <end position="225"/>
    </location>
</feature>
<feature type="binding site" evidence="1">
    <location>
        <position position="69"/>
    </location>
    <ligand>
        <name>S-adenosyl-L-methionine</name>
        <dbReference type="ChEBI" id="CHEBI:59789"/>
    </ligand>
</feature>
<feature type="binding site" evidence="1">
    <location>
        <begin position="119"/>
        <end position="120"/>
    </location>
    <ligand>
        <name>S-adenosyl-L-methionine</name>
        <dbReference type="ChEBI" id="CHEBI:59789"/>
    </ligand>
</feature>
<feature type="binding site" evidence="1">
    <location>
        <position position="136"/>
    </location>
    <ligand>
        <name>S-adenosyl-L-methionine</name>
        <dbReference type="ChEBI" id="CHEBI:59789"/>
    </ligand>
</feature>
<gene>
    <name evidence="1" type="primary">rsmG</name>
    <name type="ordered locus">Tlet_0237</name>
</gene>